<reference key="1">
    <citation type="submission" date="2008-08" db="EMBL/GenBank/DDBJ databases">
        <title>Complete sequence of Vibrio fischeri strain MJ11.</title>
        <authorList>
            <person name="Mandel M.J."/>
            <person name="Stabb E.V."/>
            <person name="Ruby E.G."/>
            <person name="Ferriera S."/>
            <person name="Johnson J."/>
            <person name="Kravitz S."/>
            <person name="Beeson K."/>
            <person name="Sutton G."/>
            <person name="Rogers Y.-H."/>
            <person name="Friedman R."/>
            <person name="Frazier M."/>
            <person name="Venter J.C."/>
        </authorList>
    </citation>
    <scope>NUCLEOTIDE SEQUENCE [LARGE SCALE GENOMIC DNA]</scope>
    <source>
        <strain>MJ11</strain>
    </source>
</reference>
<sequence length="59" mass="6745">MSKTIKVTQTKSSIGRLPKHILCLKGLGLRRINHTVEVEDTPCTRGMINKVYYMVKVEE</sequence>
<accession>B5FG27</accession>
<gene>
    <name evidence="1" type="primary">rpmD</name>
    <name type="ordered locus">VFMJ11_0243</name>
</gene>
<comment type="subunit">
    <text evidence="1">Part of the 50S ribosomal subunit.</text>
</comment>
<comment type="similarity">
    <text evidence="1">Belongs to the universal ribosomal protein uL30 family.</text>
</comment>
<evidence type="ECO:0000255" key="1">
    <source>
        <dbReference type="HAMAP-Rule" id="MF_01371"/>
    </source>
</evidence>
<evidence type="ECO:0000305" key="2"/>
<proteinExistence type="inferred from homology"/>
<dbReference type="EMBL" id="CP001139">
    <property type="protein sequence ID" value="ACH65098.1"/>
    <property type="molecule type" value="Genomic_DNA"/>
</dbReference>
<dbReference type="RefSeq" id="WP_005417257.1">
    <property type="nucleotide sequence ID" value="NC_011184.1"/>
</dbReference>
<dbReference type="SMR" id="B5FG27"/>
<dbReference type="GeneID" id="54162876"/>
<dbReference type="KEGG" id="vfm:VFMJ11_0243"/>
<dbReference type="HOGENOM" id="CLU_131047_1_4_6"/>
<dbReference type="Proteomes" id="UP000001857">
    <property type="component" value="Chromosome I"/>
</dbReference>
<dbReference type="GO" id="GO:0022625">
    <property type="term" value="C:cytosolic large ribosomal subunit"/>
    <property type="evidence" value="ECO:0007669"/>
    <property type="project" value="TreeGrafter"/>
</dbReference>
<dbReference type="GO" id="GO:0003735">
    <property type="term" value="F:structural constituent of ribosome"/>
    <property type="evidence" value="ECO:0007669"/>
    <property type="project" value="InterPro"/>
</dbReference>
<dbReference type="GO" id="GO:0006412">
    <property type="term" value="P:translation"/>
    <property type="evidence" value="ECO:0007669"/>
    <property type="project" value="UniProtKB-UniRule"/>
</dbReference>
<dbReference type="CDD" id="cd01658">
    <property type="entry name" value="Ribosomal_L30"/>
    <property type="match status" value="1"/>
</dbReference>
<dbReference type="FunFam" id="3.30.1390.20:FF:000001">
    <property type="entry name" value="50S ribosomal protein L30"/>
    <property type="match status" value="1"/>
</dbReference>
<dbReference type="Gene3D" id="3.30.1390.20">
    <property type="entry name" value="Ribosomal protein L30, ferredoxin-like fold domain"/>
    <property type="match status" value="1"/>
</dbReference>
<dbReference type="HAMAP" id="MF_01371_B">
    <property type="entry name" value="Ribosomal_uL30_B"/>
    <property type="match status" value="1"/>
</dbReference>
<dbReference type="InterPro" id="IPR036919">
    <property type="entry name" value="Ribo_uL30_ferredoxin-like_sf"/>
</dbReference>
<dbReference type="InterPro" id="IPR005996">
    <property type="entry name" value="Ribosomal_uL30_bac-type"/>
</dbReference>
<dbReference type="InterPro" id="IPR016082">
    <property type="entry name" value="Ribosomal_uL30_ferredoxin-like"/>
</dbReference>
<dbReference type="NCBIfam" id="TIGR01308">
    <property type="entry name" value="rpmD_bact"/>
    <property type="match status" value="1"/>
</dbReference>
<dbReference type="PANTHER" id="PTHR15892:SF2">
    <property type="entry name" value="LARGE RIBOSOMAL SUBUNIT PROTEIN UL30M"/>
    <property type="match status" value="1"/>
</dbReference>
<dbReference type="PANTHER" id="PTHR15892">
    <property type="entry name" value="MITOCHONDRIAL RIBOSOMAL PROTEIN L30"/>
    <property type="match status" value="1"/>
</dbReference>
<dbReference type="Pfam" id="PF00327">
    <property type="entry name" value="Ribosomal_L30"/>
    <property type="match status" value="1"/>
</dbReference>
<dbReference type="PIRSF" id="PIRSF002211">
    <property type="entry name" value="Ribosomal_L30_bac-type"/>
    <property type="match status" value="1"/>
</dbReference>
<dbReference type="SUPFAM" id="SSF55129">
    <property type="entry name" value="Ribosomal protein L30p/L7e"/>
    <property type="match status" value="1"/>
</dbReference>
<feature type="chain" id="PRO_1000144731" description="Large ribosomal subunit protein uL30">
    <location>
        <begin position="1"/>
        <end position="59"/>
    </location>
</feature>
<keyword id="KW-0687">Ribonucleoprotein</keyword>
<keyword id="KW-0689">Ribosomal protein</keyword>
<organism>
    <name type="scientific">Aliivibrio fischeri (strain MJ11)</name>
    <name type="common">Vibrio fischeri</name>
    <dbReference type="NCBI Taxonomy" id="388396"/>
    <lineage>
        <taxon>Bacteria</taxon>
        <taxon>Pseudomonadati</taxon>
        <taxon>Pseudomonadota</taxon>
        <taxon>Gammaproteobacteria</taxon>
        <taxon>Vibrionales</taxon>
        <taxon>Vibrionaceae</taxon>
        <taxon>Aliivibrio</taxon>
    </lineage>
</organism>
<name>RL30_ALIFM</name>
<protein>
    <recommendedName>
        <fullName evidence="1">Large ribosomal subunit protein uL30</fullName>
    </recommendedName>
    <alternativeName>
        <fullName evidence="2">50S ribosomal protein L30</fullName>
    </alternativeName>
</protein>